<sequence length="112" mass="13468">MENRFEISMLIDYYGTLLTEKQFNVMTLYYNEDLSLAEIAEINKTSRQAIYDLIKRCCKQLHSYDEKLKLSKKIDKRYRIKEELMAELNKNSNLDEDIKKYIDEKLEEIINA</sequence>
<name>Y1968_CLOP1</name>
<feature type="chain" id="PRO_1000012525" description="UPF0122 protein CPF_1968">
    <location>
        <begin position="1"/>
        <end position="112"/>
    </location>
</feature>
<dbReference type="EMBL" id="CP000246">
    <property type="protein sequence ID" value="ABG82403.1"/>
    <property type="molecule type" value="Genomic_DNA"/>
</dbReference>
<dbReference type="RefSeq" id="WP_003458448.1">
    <property type="nucleotide sequence ID" value="NC_008261.1"/>
</dbReference>
<dbReference type="SMR" id="Q0TPN9"/>
<dbReference type="STRING" id="195103.CPF_1968"/>
<dbReference type="PaxDb" id="195103-CPF_1968"/>
<dbReference type="KEGG" id="cpf:CPF_1968"/>
<dbReference type="eggNOG" id="COG2739">
    <property type="taxonomic scope" value="Bacteria"/>
</dbReference>
<dbReference type="HOGENOM" id="CLU_129218_1_0_9"/>
<dbReference type="Proteomes" id="UP000001823">
    <property type="component" value="Chromosome"/>
</dbReference>
<dbReference type="Gene3D" id="1.10.10.10">
    <property type="entry name" value="Winged helix-like DNA-binding domain superfamily/Winged helix DNA-binding domain"/>
    <property type="match status" value="1"/>
</dbReference>
<dbReference type="HAMAP" id="MF_00245">
    <property type="entry name" value="UPF0122"/>
    <property type="match status" value="1"/>
</dbReference>
<dbReference type="InterPro" id="IPR013324">
    <property type="entry name" value="RNA_pol_sigma_r3/r4-like"/>
</dbReference>
<dbReference type="InterPro" id="IPR007394">
    <property type="entry name" value="UPF0122"/>
</dbReference>
<dbReference type="InterPro" id="IPR054831">
    <property type="entry name" value="UPF0122_fam_protein"/>
</dbReference>
<dbReference type="InterPro" id="IPR036388">
    <property type="entry name" value="WH-like_DNA-bd_sf"/>
</dbReference>
<dbReference type="NCBIfam" id="NF001072">
    <property type="entry name" value="PRK00118.2-2"/>
    <property type="match status" value="1"/>
</dbReference>
<dbReference type="NCBIfam" id="NF045758">
    <property type="entry name" value="YlxM"/>
    <property type="match status" value="1"/>
</dbReference>
<dbReference type="PANTHER" id="PTHR40083">
    <property type="entry name" value="UPF0122 PROTEIN CBO2450/CLC_2298"/>
    <property type="match status" value="1"/>
</dbReference>
<dbReference type="PANTHER" id="PTHR40083:SF1">
    <property type="entry name" value="UPF0122 PROTEIN YLXM"/>
    <property type="match status" value="1"/>
</dbReference>
<dbReference type="Pfam" id="PF04297">
    <property type="entry name" value="UPF0122"/>
    <property type="match status" value="1"/>
</dbReference>
<dbReference type="SUPFAM" id="SSF88659">
    <property type="entry name" value="Sigma3 and sigma4 domains of RNA polymerase sigma factors"/>
    <property type="match status" value="1"/>
</dbReference>
<evidence type="ECO:0000255" key="1">
    <source>
        <dbReference type="HAMAP-Rule" id="MF_00245"/>
    </source>
</evidence>
<proteinExistence type="inferred from homology"/>
<accession>Q0TPN9</accession>
<organism>
    <name type="scientific">Clostridium perfringens (strain ATCC 13124 / DSM 756 / JCM 1290 / NCIMB 6125 / NCTC 8237 / Type A)</name>
    <dbReference type="NCBI Taxonomy" id="195103"/>
    <lineage>
        <taxon>Bacteria</taxon>
        <taxon>Bacillati</taxon>
        <taxon>Bacillota</taxon>
        <taxon>Clostridia</taxon>
        <taxon>Eubacteriales</taxon>
        <taxon>Clostridiaceae</taxon>
        <taxon>Clostridium</taxon>
    </lineage>
</organism>
<reference key="1">
    <citation type="journal article" date="2006" name="Genome Res.">
        <title>Skewed genomic variability in strains of the toxigenic bacterial pathogen, Clostridium perfringens.</title>
        <authorList>
            <person name="Myers G.S.A."/>
            <person name="Rasko D.A."/>
            <person name="Cheung J.K."/>
            <person name="Ravel J."/>
            <person name="Seshadri R."/>
            <person name="DeBoy R.T."/>
            <person name="Ren Q."/>
            <person name="Varga J."/>
            <person name="Awad M.M."/>
            <person name="Brinkac L.M."/>
            <person name="Daugherty S.C."/>
            <person name="Haft D.H."/>
            <person name="Dodson R.J."/>
            <person name="Madupu R."/>
            <person name="Nelson W.C."/>
            <person name="Rosovitz M.J."/>
            <person name="Sullivan S.A."/>
            <person name="Khouri H."/>
            <person name="Dimitrov G.I."/>
            <person name="Watkins K.L."/>
            <person name="Mulligan S."/>
            <person name="Benton J."/>
            <person name="Radune D."/>
            <person name="Fisher D.J."/>
            <person name="Atkins H.S."/>
            <person name="Hiscox T."/>
            <person name="Jost B.H."/>
            <person name="Billington S.J."/>
            <person name="Songer J.G."/>
            <person name="McClane B.A."/>
            <person name="Titball R.W."/>
            <person name="Rood J.I."/>
            <person name="Melville S.B."/>
            <person name="Paulsen I.T."/>
        </authorList>
    </citation>
    <scope>NUCLEOTIDE SEQUENCE [LARGE SCALE GENOMIC DNA]</scope>
    <source>
        <strain>ATCC 13124 / DSM 756 / JCM 1290 / NCIMB 6125 / NCTC 8237 / S 107 / Type A</strain>
    </source>
</reference>
<gene>
    <name type="ordered locus">CPF_1968</name>
</gene>
<comment type="function">
    <text evidence="1">Might take part in the signal recognition particle (SRP) pathway. This is inferred from the conservation of its genetic proximity to ftsY/ffh. May be a regulatory protein.</text>
</comment>
<comment type="similarity">
    <text evidence="1">Belongs to the UPF0122 family.</text>
</comment>
<protein>
    <recommendedName>
        <fullName evidence="1">UPF0122 protein CPF_1968</fullName>
    </recommendedName>
</protein>